<proteinExistence type="inferred from homology"/>
<organism>
    <name type="scientific">Mycobacteroides abscessus (strain ATCC 19977 / DSM 44196 / CCUG 20993 / CIP 104536 / JCM 13569 / NCTC 13031 / TMC 1543 / L948)</name>
    <name type="common">Mycobacterium abscessus</name>
    <dbReference type="NCBI Taxonomy" id="561007"/>
    <lineage>
        <taxon>Bacteria</taxon>
        <taxon>Bacillati</taxon>
        <taxon>Actinomycetota</taxon>
        <taxon>Actinomycetes</taxon>
        <taxon>Mycobacteriales</taxon>
        <taxon>Mycobacteriaceae</taxon>
        <taxon>Mycobacteroides</taxon>
        <taxon>Mycobacteroides abscessus</taxon>
    </lineage>
</organism>
<feature type="chain" id="PRO_0000387845" description="4-hydroxy-2-oxovalerate aldolase 2">
    <location>
        <begin position="1"/>
        <end position="333"/>
    </location>
</feature>
<feature type="domain" description="Pyruvate carboxyltransferase" evidence="1">
    <location>
        <begin position="4"/>
        <end position="256"/>
    </location>
</feature>
<feature type="active site" description="Proton acceptor" evidence="1">
    <location>
        <position position="16"/>
    </location>
</feature>
<feature type="binding site" evidence="1">
    <location>
        <begin position="12"/>
        <end position="13"/>
    </location>
    <ligand>
        <name>substrate</name>
    </ligand>
</feature>
<feature type="binding site" evidence="1">
    <location>
        <position position="13"/>
    </location>
    <ligand>
        <name>Mn(2+)</name>
        <dbReference type="ChEBI" id="CHEBI:29035"/>
    </ligand>
</feature>
<feature type="binding site" evidence="1">
    <location>
        <position position="166"/>
    </location>
    <ligand>
        <name>substrate</name>
    </ligand>
</feature>
<feature type="binding site" evidence="1">
    <location>
        <position position="195"/>
    </location>
    <ligand>
        <name>Mn(2+)</name>
        <dbReference type="ChEBI" id="CHEBI:29035"/>
    </ligand>
</feature>
<feature type="binding site" evidence="1">
    <location>
        <position position="195"/>
    </location>
    <ligand>
        <name>substrate</name>
    </ligand>
</feature>
<feature type="binding site" evidence="1">
    <location>
        <position position="197"/>
    </location>
    <ligand>
        <name>Mn(2+)</name>
        <dbReference type="ChEBI" id="CHEBI:29035"/>
    </ligand>
</feature>
<feature type="binding site" evidence="1">
    <location>
        <position position="286"/>
    </location>
    <ligand>
        <name>substrate</name>
    </ligand>
</feature>
<feature type="site" description="Transition state stabilizer" evidence="1">
    <location>
        <position position="12"/>
    </location>
</feature>
<protein>
    <recommendedName>
        <fullName evidence="1">4-hydroxy-2-oxovalerate aldolase 2</fullName>
        <shortName evidence="1">HOA 2</shortName>
        <ecNumber evidence="1">4.1.3.39</ecNumber>
    </recommendedName>
    <alternativeName>
        <fullName evidence="1">4-hydroxy-2-keto-pentanoic acid aldolase 2</fullName>
    </alternativeName>
    <alternativeName>
        <fullName evidence="1">4-hydroxy-2-oxopentanoate aldolase 2</fullName>
    </alternativeName>
</protein>
<reference key="1">
    <citation type="journal article" date="2009" name="PLoS ONE">
        <title>Non mycobacterial virulence genes in the genome of the emerging pathogen Mycobacterium abscessus.</title>
        <authorList>
            <person name="Ripoll F."/>
            <person name="Pasek S."/>
            <person name="Schenowitz C."/>
            <person name="Dossat C."/>
            <person name="Barbe V."/>
            <person name="Rottman M."/>
            <person name="Macheras E."/>
            <person name="Heym B."/>
            <person name="Herrmann J.L."/>
            <person name="Daffe M."/>
            <person name="Brosch R."/>
            <person name="Risler J.L."/>
            <person name="Gaillard J.L."/>
        </authorList>
    </citation>
    <scope>NUCLEOTIDE SEQUENCE [LARGE SCALE GENOMIC DNA]</scope>
    <source>
        <strain>ATCC 19977 / DSM 44196 / CCUG 20993 / CIP 104536 / JCM 13569 / NCTC 13031 / TMC 1543 / L948</strain>
    </source>
</reference>
<dbReference type="EC" id="4.1.3.39" evidence="1"/>
<dbReference type="EMBL" id="CU458896">
    <property type="protein sequence ID" value="CAM64446.1"/>
    <property type="molecule type" value="Genomic_DNA"/>
</dbReference>
<dbReference type="SMR" id="B1MJT9"/>
<dbReference type="GeneID" id="93381323"/>
<dbReference type="KEGG" id="mab:MAB_4375"/>
<dbReference type="Proteomes" id="UP000007137">
    <property type="component" value="Chromosome"/>
</dbReference>
<dbReference type="GO" id="GO:0003852">
    <property type="term" value="F:2-isopropylmalate synthase activity"/>
    <property type="evidence" value="ECO:0007669"/>
    <property type="project" value="TreeGrafter"/>
</dbReference>
<dbReference type="GO" id="GO:0008701">
    <property type="term" value="F:4-hydroxy-2-oxovalerate aldolase activity"/>
    <property type="evidence" value="ECO:0007669"/>
    <property type="project" value="UniProtKB-UniRule"/>
</dbReference>
<dbReference type="GO" id="GO:0030145">
    <property type="term" value="F:manganese ion binding"/>
    <property type="evidence" value="ECO:0007669"/>
    <property type="project" value="UniProtKB-UniRule"/>
</dbReference>
<dbReference type="GO" id="GO:0009056">
    <property type="term" value="P:catabolic process"/>
    <property type="evidence" value="ECO:0007669"/>
    <property type="project" value="UniProtKB-KW"/>
</dbReference>
<dbReference type="GO" id="GO:0009098">
    <property type="term" value="P:L-leucine biosynthetic process"/>
    <property type="evidence" value="ECO:0007669"/>
    <property type="project" value="TreeGrafter"/>
</dbReference>
<dbReference type="CDD" id="cd07943">
    <property type="entry name" value="DRE_TIM_HOA"/>
    <property type="match status" value="1"/>
</dbReference>
<dbReference type="Gene3D" id="1.10.8.60">
    <property type="match status" value="1"/>
</dbReference>
<dbReference type="Gene3D" id="3.20.20.70">
    <property type="entry name" value="Aldolase class I"/>
    <property type="match status" value="1"/>
</dbReference>
<dbReference type="HAMAP" id="MF_01656">
    <property type="entry name" value="HOA"/>
    <property type="match status" value="1"/>
</dbReference>
<dbReference type="InterPro" id="IPR050073">
    <property type="entry name" value="2-IPM_HCS-like"/>
</dbReference>
<dbReference type="InterPro" id="IPR017629">
    <property type="entry name" value="4OH_2_O-val_aldolase"/>
</dbReference>
<dbReference type="InterPro" id="IPR013785">
    <property type="entry name" value="Aldolase_TIM"/>
</dbReference>
<dbReference type="InterPro" id="IPR012425">
    <property type="entry name" value="DmpG_comm"/>
</dbReference>
<dbReference type="InterPro" id="IPR035685">
    <property type="entry name" value="DRE_TIM_HOA"/>
</dbReference>
<dbReference type="InterPro" id="IPR000891">
    <property type="entry name" value="PYR_CT"/>
</dbReference>
<dbReference type="NCBIfam" id="TIGR03217">
    <property type="entry name" value="4OH_2_O_val_ald"/>
    <property type="match status" value="1"/>
</dbReference>
<dbReference type="NCBIfam" id="NF006049">
    <property type="entry name" value="PRK08195.1"/>
    <property type="match status" value="1"/>
</dbReference>
<dbReference type="PANTHER" id="PTHR10277:SF9">
    <property type="entry name" value="2-ISOPROPYLMALATE SYNTHASE 1, CHLOROPLASTIC-RELATED"/>
    <property type="match status" value="1"/>
</dbReference>
<dbReference type="PANTHER" id="PTHR10277">
    <property type="entry name" value="HOMOCITRATE SYNTHASE-RELATED"/>
    <property type="match status" value="1"/>
</dbReference>
<dbReference type="Pfam" id="PF07836">
    <property type="entry name" value="DmpG_comm"/>
    <property type="match status" value="1"/>
</dbReference>
<dbReference type="Pfam" id="PF00682">
    <property type="entry name" value="HMGL-like"/>
    <property type="match status" value="1"/>
</dbReference>
<dbReference type="SUPFAM" id="SSF51569">
    <property type="entry name" value="Aldolase"/>
    <property type="match status" value="1"/>
</dbReference>
<dbReference type="SUPFAM" id="SSF89000">
    <property type="entry name" value="post-HMGL domain-like"/>
    <property type="match status" value="1"/>
</dbReference>
<dbReference type="PROSITE" id="PS50991">
    <property type="entry name" value="PYR_CT"/>
    <property type="match status" value="1"/>
</dbReference>
<sequence>MTQLYIQDVTLRDGMHAIRHQISPTAVARIASALEAAGVNAIEVAHGDGLAGGSVNYGPGSNTDWEWIEAAADAVTTAKLTTLLLPGIGTVAELKRAYSLGVRSIRVAAHCTEADITAQHITMARELGMDVSGFLMLSHMASAETLAEQAKLMETFGAHCVYVTDSGGRLTMPMVRDRVRAYRDVLDSHTEIGIHAHENLSLSVANSVVAVEEGATRIDASLAGHGAGAGNCPLEAFVAVADLHGWGHSCDLFALQDAADDLVRPLHDRPVRVDRETLTLGYAGVYSSFLRHAEAAAQRYDVDVRSILIEAGRRRLVGGQEDMLVDIALSLST</sequence>
<name>HOA2_MYCA9</name>
<gene>
    <name type="ordered locus">MAB_4375</name>
</gene>
<keyword id="KW-0058">Aromatic hydrocarbons catabolism</keyword>
<keyword id="KW-0456">Lyase</keyword>
<keyword id="KW-0464">Manganese</keyword>
<keyword id="KW-0479">Metal-binding</keyword>
<keyword id="KW-1185">Reference proteome</keyword>
<comment type="catalytic activity">
    <reaction evidence="1">
        <text>(S)-4-hydroxy-2-oxopentanoate = acetaldehyde + pyruvate</text>
        <dbReference type="Rhea" id="RHEA:22624"/>
        <dbReference type="ChEBI" id="CHEBI:15343"/>
        <dbReference type="ChEBI" id="CHEBI:15361"/>
        <dbReference type="ChEBI" id="CHEBI:73143"/>
        <dbReference type="EC" id="4.1.3.39"/>
    </reaction>
</comment>
<comment type="similarity">
    <text evidence="1">Belongs to the 4-hydroxy-2-oxovalerate aldolase family.</text>
</comment>
<evidence type="ECO:0000255" key="1">
    <source>
        <dbReference type="HAMAP-Rule" id="MF_01656"/>
    </source>
</evidence>
<accession>B1MJT9</accession>